<feature type="chain" id="PRO_1000000722" description="Endoribonuclease YbeY">
    <location>
        <begin position="1"/>
        <end position="156"/>
    </location>
</feature>
<feature type="binding site" evidence="1">
    <location>
        <position position="122"/>
    </location>
    <ligand>
        <name>Zn(2+)</name>
        <dbReference type="ChEBI" id="CHEBI:29105"/>
        <note>catalytic</note>
    </ligand>
</feature>
<feature type="binding site" evidence="1">
    <location>
        <position position="126"/>
    </location>
    <ligand>
        <name>Zn(2+)</name>
        <dbReference type="ChEBI" id="CHEBI:29105"/>
        <note>catalytic</note>
    </ligand>
</feature>
<feature type="binding site" evidence="1">
    <location>
        <position position="132"/>
    </location>
    <ligand>
        <name>Zn(2+)</name>
        <dbReference type="ChEBI" id="CHEBI:29105"/>
        <note>catalytic</note>
    </ligand>
</feature>
<organism>
    <name type="scientific">Geobacillus thermodenitrificans (strain NG80-2)</name>
    <dbReference type="NCBI Taxonomy" id="420246"/>
    <lineage>
        <taxon>Bacteria</taxon>
        <taxon>Bacillati</taxon>
        <taxon>Bacillota</taxon>
        <taxon>Bacilli</taxon>
        <taxon>Bacillales</taxon>
        <taxon>Anoxybacillaceae</taxon>
        <taxon>Geobacillus</taxon>
    </lineage>
</organism>
<reference key="1">
    <citation type="journal article" date="2007" name="Proc. Natl. Acad. Sci. U.S.A.">
        <title>Genome and proteome of long-chain alkane degrading Geobacillus thermodenitrificans NG80-2 isolated from a deep-subsurface oil reservoir.</title>
        <authorList>
            <person name="Feng L."/>
            <person name="Wang W."/>
            <person name="Cheng J."/>
            <person name="Ren Y."/>
            <person name="Zhao G."/>
            <person name="Gao C."/>
            <person name="Tang Y."/>
            <person name="Liu X."/>
            <person name="Han W."/>
            <person name="Peng X."/>
            <person name="Liu R."/>
            <person name="Wang L."/>
        </authorList>
    </citation>
    <scope>NUCLEOTIDE SEQUENCE [LARGE SCALE GENOMIC DNA]</scope>
    <source>
        <strain>NG80-2</strain>
    </source>
</reference>
<protein>
    <recommendedName>
        <fullName evidence="1">Endoribonuclease YbeY</fullName>
        <ecNumber evidence="1">3.1.-.-</ecNumber>
    </recommendedName>
</protein>
<keyword id="KW-0963">Cytoplasm</keyword>
<keyword id="KW-0255">Endonuclease</keyword>
<keyword id="KW-0378">Hydrolase</keyword>
<keyword id="KW-0479">Metal-binding</keyword>
<keyword id="KW-0540">Nuclease</keyword>
<keyword id="KW-0690">Ribosome biogenesis</keyword>
<keyword id="KW-0698">rRNA processing</keyword>
<keyword id="KW-0862">Zinc</keyword>
<accession>A4IR19</accession>
<proteinExistence type="inferred from homology"/>
<name>YBEY_GEOTN</name>
<comment type="function">
    <text evidence="1">Single strand-specific metallo-endoribonuclease involved in late-stage 70S ribosome quality control and in maturation of the 3' terminus of the 16S rRNA.</text>
</comment>
<comment type="cofactor">
    <cofactor evidence="1">
        <name>Zn(2+)</name>
        <dbReference type="ChEBI" id="CHEBI:29105"/>
    </cofactor>
    <text evidence="1">Binds 1 zinc ion.</text>
</comment>
<comment type="subcellular location">
    <subcellularLocation>
        <location evidence="1">Cytoplasm</location>
    </subcellularLocation>
</comment>
<comment type="similarity">
    <text evidence="1">Belongs to the endoribonuclease YbeY family.</text>
</comment>
<gene>
    <name evidence="1" type="primary">ybeY</name>
    <name type="ordered locus">GTNG_2428</name>
</gene>
<evidence type="ECO:0000255" key="1">
    <source>
        <dbReference type="HAMAP-Rule" id="MF_00009"/>
    </source>
</evidence>
<sequence length="156" mass="17566">MTIQIDFIDETNEVTAEQIETLEQLIREAAAVENVPEGAEVSVSFVDNERIRVMNRDYRGKDAPTDVLSFALEEEGEGEIDIIGADVPPVLGDIIISIPKAKEQAAEYGHSFMRELGFLAVHGFLHLLGYDHETEEEERVMFAKQEEILTRFGLTR</sequence>
<dbReference type="EC" id="3.1.-.-" evidence="1"/>
<dbReference type="EMBL" id="CP000557">
    <property type="protein sequence ID" value="ABO67773.1"/>
    <property type="molecule type" value="Genomic_DNA"/>
</dbReference>
<dbReference type="RefSeq" id="WP_008879906.1">
    <property type="nucleotide sequence ID" value="NC_009328.1"/>
</dbReference>
<dbReference type="SMR" id="A4IR19"/>
<dbReference type="GeneID" id="87623425"/>
<dbReference type="KEGG" id="gtn:GTNG_2428"/>
<dbReference type="eggNOG" id="COG0319">
    <property type="taxonomic scope" value="Bacteria"/>
</dbReference>
<dbReference type="HOGENOM" id="CLU_106710_3_0_9"/>
<dbReference type="Proteomes" id="UP000001578">
    <property type="component" value="Chromosome"/>
</dbReference>
<dbReference type="GO" id="GO:0005737">
    <property type="term" value="C:cytoplasm"/>
    <property type="evidence" value="ECO:0007669"/>
    <property type="project" value="UniProtKB-SubCell"/>
</dbReference>
<dbReference type="GO" id="GO:0004222">
    <property type="term" value="F:metalloendopeptidase activity"/>
    <property type="evidence" value="ECO:0007669"/>
    <property type="project" value="InterPro"/>
</dbReference>
<dbReference type="GO" id="GO:0004521">
    <property type="term" value="F:RNA endonuclease activity"/>
    <property type="evidence" value="ECO:0007669"/>
    <property type="project" value="UniProtKB-UniRule"/>
</dbReference>
<dbReference type="GO" id="GO:0008270">
    <property type="term" value="F:zinc ion binding"/>
    <property type="evidence" value="ECO:0007669"/>
    <property type="project" value="UniProtKB-UniRule"/>
</dbReference>
<dbReference type="GO" id="GO:0006364">
    <property type="term" value="P:rRNA processing"/>
    <property type="evidence" value="ECO:0007669"/>
    <property type="project" value="UniProtKB-UniRule"/>
</dbReference>
<dbReference type="Gene3D" id="3.40.390.30">
    <property type="entry name" value="Metalloproteases ('zincins'), catalytic domain"/>
    <property type="match status" value="1"/>
</dbReference>
<dbReference type="HAMAP" id="MF_00009">
    <property type="entry name" value="Endoribonucl_YbeY"/>
    <property type="match status" value="1"/>
</dbReference>
<dbReference type="InterPro" id="IPR023091">
    <property type="entry name" value="MetalPrtase_cat_dom_sf_prd"/>
</dbReference>
<dbReference type="InterPro" id="IPR002036">
    <property type="entry name" value="YbeY"/>
</dbReference>
<dbReference type="InterPro" id="IPR020549">
    <property type="entry name" value="YbeY_CS"/>
</dbReference>
<dbReference type="NCBIfam" id="TIGR00043">
    <property type="entry name" value="rRNA maturation RNase YbeY"/>
    <property type="match status" value="1"/>
</dbReference>
<dbReference type="PANTHER" id="PTHR46986">
    <property type="entry name" value="ENDORIBONUCLEASE YBEY, CHLOROPLASTIC"/>
    <property type="match status" value="1"/>
</dbReference>
<dbReference type="PANTHER" id="PTHR46986:SF1">
    <property type="entry name" value="ENDORIBONUCLEASE YBEY, CHLOROPLASTIC"/>
    <property type="match status" value="1"/>
</dbReference>
<dbReference type="Pfam" id="PF02130">
    <property type="entry name" value="YbeY"/>
    <property type="match status" value="1"/>
</dbReference>
<dbReference type="SUPFAM" id="SSF55486">
    <property type="entry name" value="Metalloproteases ('zincins'), catalytic domain"/>
    <property type="match status" value="1"/>
</dbReference>
<dbReference type="PROSITE" id="PS01306">
    <property type="entry name" value="UPF0054"/>
    <property type="match status" value="1"/>
</dbReference>